<proteinExistence type="inferred from homology"/>
<gene>
    <name evidence="1" type="primary">rpsH</name>
    <name type="ordered locus">Bind_1368</name>
</gene>
<comment type="function">
    <text evidence="1">One of the primary rRNA binding proteins, it binds directly to 16S rRNA central domain where it helps coordinate assembly of the platform of the 30S subunit.</text>
</comment>
<comment type="subunit">
    <text evidence="1">Part of the 30S ribosomal subunit. Contacts proteins S5 and S12.</text>
</comment>
<comment type="similarity">
    <text evidence="1">Belongs to the universal ribosomal protein uS8 family.</text>
</comment>
<name>RS8_BEII9</name>
<feature type="chain" id="PRO_1000140514" description="Small ribosomal subunit protein uS8">
    <location>
        <begin position="1"/>
        <end position="132"/>
    </location>
</feature>
<accession>B2IK76</accession>
<organism>
    <name type="scientific">Beijerinckia indica subsp. indica (strain ATCC 9039 / DSM 1715 / NCIMB 8712)</name>
    <dbReference type="NCBI Taxonomy" id="395963"/>
    <lineage>
        <taxon>Bacteria</taxon>
        <taxon>Pseudomonadati</taxon>
        <taxon>Pseudomonadota</taxon>
        <taxon>Alphaproteobacteria</taxon>
        <taxon>Hyphomicrobiales</taxon>
        <taxon>Beijerinckiaceae</taxon>
        <taxon>Beijerinckia</taxon>
    </lineage>
</organism>
<evidence type="ECO:0000255" key="1">
    <source>
        <dbReference type="HAMAP-Rule" id="MF_01302"/>
    </source>
</evidence>
<evidence type="ECO:0000305" key="2"/>
<dbReference type="EMBL" id="CP001016">
    <property type="protein sequence ID" value="ACB95008.1"/>
    <property type="molecule type" value="Genomic_DNA"/>
</dbReference>
<dbReference type="RefSeq" id="WP_012384365.1">
    <property type="nucleotide sequence ID" value="NC_010581.1"/>
</dbReference>
<dbReference type="SMR" id="B2IK76"/>
<dbReference type="STRING" id="395963.Bind_1368"/>
<dbReference type="KEGG" id="bid:Bind_1368"/>
<dbReference type="eggNOG" id="COG0096">
    <property type="taxonomic scope" value="Bacteria"/>
</dbReference>
<dbReference type="HOGENOM" id="CLU_098428_0_0_5"/>
<dbReference type="OrthoDB" id="9802617at2"/>
<dbReference type="Proteomes" id="UP000001695">
    <property type="component" value="Chromosome"/>
</dbReference>
<dbReference type="GO" id="GO:1990904">
    <property type="term" value="C:ribonucleoprotein complex"/>
    <property type="evidence" value="ECO:0007669"/>
    <property type="project" value="UniProtKB-KW"/>
</dbReference>
<dbReference type="GO" id="GO:0005840">
    <property type="term" value="C:ribosome"/>
    <property type="evidence" value="ECO:0007669"/>
    <property type="project" value="UniProtKB-KW"/>
</dbReference>
<dbReference type="GO" id="GO:0019843">
    <property type="term" value="F:rRNA binding"/>
    <property type="evidence" value="ECO:0007669"/>
    <property type="project" value="UniProtKB-UniRule"/>
</dbReference>
<dbReference type="GO" id="GO:0003735">
    <property type="term" value="F:structural constituent of ribosome"/>
    <property type="evidence" value="ECO:0007669"/>
    <property type="project" value="InterPro"/>
</dbReference>
<dbReference type="GO" id="GO:0006412">
    <property type="term" value="P:translation"/>
    <property type="evidence" value="ECO:0007669"/>
    <property type="project" value="UniProtKB-UniRule"/>
</dbReference>
<dbReference type="FunFam" id="3.30.1370.30:FF:000002">
    <property type="entry name" value="30S ribosomal protein S8"/>
    <property type="match status" value="1"/>
</dbReference>
<dbReference type="FunFam" id="3.30.1490.10:FF:000001">
    <property type="entry name" value="30S ribosomal protein S8"/>
    <property type="match status" value="1"/>
</dbReference>
<dbReference type="Gene3D" id="3.30.1370.30">
    <property type="match status" value="1"/>
</dbReference>
<dbReference type="Gene3D" id="3.30.1490.10">
    <property type="match status" value="1"/>
</dbReference>
<dbReference type="HAMAP" id="MF_01302_B">
    <property type="entry name" value="Ribosomal_uS8_B"/>
    <property type="match status" value="1"/>
</dbReference>
<dbReference type="InterPro" id="IPR000630">
    <property type="entry name" value="Ribosomal_uS8"/>
</dbReference>
<dbReference type="InterPro" id="IPR047863">
    <property type="entry name" value="Ribosomal_uS8_CS"/>
</dbReference>
<dbReference type="InterPro" id="IPR035987">
    <property type="entry name" value="Ribosomal_uS8_sf"/>
</dbReference>
<dbReference type="NCBIfam" id="NF001109">
    <property type="entry name" value="PRK00136.1"/>
    <property type="match status" value="1"/>
</dbReference>
<dbReference type="PANTHER" id="PTHR11758">
    <property type="entry name" value="40S RIBOSOMAL PROTEIN S15A"/>
    <property type="match status" value="1"/>
</dbReference>
<dbReference type="Pfam" id="PF00410">
    <property type="entry name" value="Ribosomal_S8"/>
    <property type="match status" value="1"/>
</dbReference>
<dbReference type="SUPFAM" id="SSF56047">
    <property type="entry name" value="Ribosomal protein S8"/>
    <property type="match status" value="1"/>
</dbReference>
<dbReference type="PROSITE" id="PS00053">
    <property type="entry name" value="RIBOSOMAL_S8"/>
    <property type="match status" value="1"/>
</dbReference>
<sequence length="132" mass="14615">MAVNDPLGDMLTRIRNAQMRRKGKVQTPGSRLRAHVLDVLQEEGYIRGYSTTEYGNGRSEFEIELKYFDGLPVIREIQRVSKPGRRVYTAVNAIPRVANGLGISIISTPKGVMADHAAREANVGGEVLCKVF</sequence>
<protein>
    <recommendedName>
        <fullName evidence="1">Small ribosomal subunit protein uS8</fullName>
    </recommendedName>
    <alternativeName>
        <fullName evidence="2">30S ribosomal protein S8</fullName>
    </alternativeName>
</protein>
<keyword id="KW-1185">Reference proteome</keyword>
<keyword id="KW-0687">Ribonucleoprotein</keyword>
<keyword id="KW-0689">Ribosomal protein</keyword>
<keyword id="KW-0694">RNA-binding</keyword>
<keyword id="KW-0699">rRNA-binding</keyword>
<reference key="1">
    <citation type="journal article" date="2010" name="J. Bacteriol.">
        <title>Complete genome sequence of Beijerinckia indica subsp. indica.</title>
        <authorList>
            <person name="Tamas I."/>
            <person name="Dedysh S.N."/>
            <person name="Liesack W."/>
            <person name="Stott M.B."/>
            <person name="Alam M."/>
            <person name="Murrell J.C."/>
            <person name="Dunfield P.F."/>
        </authorList>
    </citation>
    <scope>NUCLEOTIDE SEQUENCE [LARGE SCALE GENOMIC DNA]</scope>
    <source>
        <strain>ATCC 9039 / DSM 1715 / NCIMB 8712</strain>
    </source>
</reference>